<gene>
    <name evidence="1" type="primary">tgt</name>
    <name type="ordered locus">Hore_12290</name>
</gene>
<sequence>MSISFNLLHREINTRARLGKLKTPHGDIDTPIFMPVGTQATVKSMTPDELENIKAQIILSNTYHLYLRPGSSLIDEAGGLHNFMNWQKPILTDSGGFQVFSLSDLREIKEEGVYFRSHLDGSRHFISPEKAIQIQMELGADIIMAFDECPPYPSDYDYVARSLERTVRWARRCKKAHEREDQALFGIIQGGVYRDLRKQSVEALIDIGFPGYAIGGLSVGEEKEKMLEVLDFTVPLMPENKPRYLMGVGAPEDLVEGVIRGVDMFDCVLPTRIARHGTVFTSQGRLTVRNAGYERDFTPLDPECDCYVCKNYTRAYIRHLIKRKEILGVRLTTYHNLYFLLSLMEKIRGAIKEDALLEFRDEFLRKYLNKASI</sequence>
<protein>
    <recommendedName>
        <fullName evidence="1">Queuine tRNA-ribosyltransferase</fullName>
        <ecNumber evidence="1">2.4.2.29</ecNumber>
    </recommendedName>
    <alternativeName>
        <fullName evidence="1">Guanine insertion enzyme</fullName>
    </alternativeName>
    <alternativeName>
        <fullName evidence="1">tRNA-guanine transglycosylase</fullName>
    </alternativeName>
</protein>
<proteinExistence type="inferred from homology"/>
<evidence type="ECO:0000255" key="1">
    <source>
        <dbReference type="HAMAP-Rule" id="MF_00168"/>
    </source>
</evidence>
<name>TGT_HALOH</name>
<organism>
    <name type="scientific">Halothermothrix orenii (strain H 168 / OCM 544 / DSM 9562)</name>
    <dbReference type="NCBI Taxonomy" id="373903"/>
    <lineage>
        <taxon>Bacteria</taxon>
        <taxon>Bacillati</taxon>
        <taxon>Bacillota</taxon>
        <taxon>Clostridia</taxon>
        <taxon>Halanaerobiales</taxon>
        <taxon>Halothermotrichaceae</taxon>
        <taxon>Halothermothrix</taxon>
    </lineage>
</organism>
<comment type="function">
    <text evidence="1">Catalyzes the base-exchange of a guanine (G) residue with the queuine precursor 7-aminomethyl-7-deazaguanine (PreQ1) at position 34 (anticodon wobble position) in tRNAs with GU(N) anticodons (tRNA-Asp, -Asn, -His and -Tyr). Catalysis occurs through a double-displacement mechanism. The nucleophile active site attacks the C1' of nucleotide 34 to detach the guanine base from the RNA, forming a covalent enzyme-RNA intermediate. The proton acceptor active site deprotonates the incoming PreQ1, allowing a nucleophilic attack on the C1' of the ribose to form the product. After dissociation, two additional enzymatic reactions on the tRNA convert PreQ1 to queuine (Q), resulting in the hypermodified nucleoside queuosine (7-(((4,5-cis-dihydroxy-2-cyclopenten-1-yl)amino)methyl)-7-deazaguanosine).</text>
</comment>
<comment type="catalytic activity">
    <reaction evidence="1">
        <text>7-aminomethyl-7-carbaguanine + guanosine(34) in tRNA = 7-aminomethyl-7-carbaguanosine(34) in tRNA + guanine</text>
        <dbReference type="Rhea" id="RHEA:24104"/>
        <dbReference type="Rhea" id="RHEA-COMP:10341"/>
        <dbReference type="Rhea" id="RHEA-COMP:10342"/>
        <dbReference type="ChEBI" id="CHEBI:16235"/>
        <dbReference type="ChEBI" id="CHEBI:58703"/>
        <dbReference type="ChEBI" id="CHEBI:74269"/>
        <dbReference type="ChEBI" id="CHEBI:82833"/>
        <dbReference type="EC" id="2.4.2.29"/>
    </reaction>
</comment>
<comment type="cofactor">
    <cofactor evidence="1">
        <name>Zn(2+)</name>
        <dbReference type="ChEBI" id="CHEBI:29105"/>
    </cofactor>
    <text evidence="1">Binds 1 zinc ion per subunit.</text>
</comment>
<comment type="pathway">
    <text evidence="1">tRNA modification; tRNA-queuosine biosynthesis.</text>
</comment>
<comment type="subunit">
    <text evidence="1">Homodimer. Within each dimer, one monomer is responsible for RNA recognition and catalysis, while the other monomer binds to the replacement base PreQ1.</text>
</comment>
<comment type="similarity">
    <text evidence="1">Belongs to the queuine tRNA-ribosyltransferase family.</text>
</comment>
<keyword id="KW-0328">Glycosyltransferase</keyword>
<keyword id="KW-0479">Metal-binding</keyword>
<keyword id="KW-0671">Queuosine biosynthesis</keyword>
<keyword id="KW-1185">Reference proteome</keyword>
<keyword id="KW-0808">Transferase</keyword>
<keyword id="KW-0819">tRNA processing</keyword>
<keyword id="KW-0862">Zinc</keyword>
<accession>B8CXG0</accession>
<feature type="chain" id="PRO_1000198010" description="Queuine tRNA-ribosyltransferase">
    <location>
        <begin position="1"/>
        <end position="373"/>
    </location>
</feature>
<feature type="region of interest" description="RNA binding" evidence="1">
    <location>
        <begin position="247"/>
        <end position="253"/>
    </location>
</feature>
<feature type="region of interest" description="RNA binding; important for wobble base 34 recognition" evidence="1">
    <location>
        <begin position="271"/>
        <end position="275"/>
    </location>
</feature>
<feature type="active site" description="Proton acceptor" evidence="1">
    <location>
        <position position="93"/>
    </location>
</feature>
<feature type="active site" description="Nucleophile" evidence="1">
    <location>
        <position position="266"/>
    </location>
</feature>
<feature type="binding site" evidence="1">
    <location>
        <begin position="93"/>
        <end position="97"/>
    </location>
    <ligand>
        <name>substrate</name>
    </ligand>
</feature>
<feature type="binding site" evidence="1">
    <location>
        <position position="147"/>
    </location>
    <ligand>
        <name>substrate</name>
    </ligand>
</feature>
<feature type="binding site" evidence="1">
    <location>
        <position position="189"/>
    </location>
    <ligand>
        <name>substrate</name>
    </ligand>
</feature>
<feature type="binding site" evidence="1">
    <location>
        <position position="216"/>
    </location>
    <ligand>
        <name>substrate</name>
    </ligand>
</feature>
<feature type="binding site" evidence="1">
    <location>
        <position position="304"/>
    </location>
    <ligand>
        <name>Zn(2+)</name>
        <dbReference type="ChEBI" id="CHEBI:29105"/>
    </ligand>
</feature>
<feature type="binding site" evidence="1">
    <location>
        <position position="306"/>
    </location>
    <ligand>
        <name>Zn(2+)</name>
        <dbReference type="ChEBI" id="CHEBI:29105"/>
    </ligand>
</feature>
<feature type="binding site" evidence="1">
    <location>
        <position position="309"/>
    </location>
    <ligand>
        <name>Zn(2+)</name>
        <dbReference type="ChEBI" id="CHEBI:29105"/>
    </ligand>
</feature>
<feature type="binding site" evidence="1">
    <location>
        <position position="335"/>
    </location>
    <ligand>
        <name>Zn(2+)</name>
        <dbReference type="ChEBI" id="CHEBI:29105"/>
    </ligand>
</feature>
<reference key="1">
    <citation type="journal article" date="2009" name="PLoS ONE">
        <title>Genome analysis of the anaerobic thermohalophilic bacterium Halothermothrix orenii.</title>
        <authorList>
            <person name="Mavromatis K."/>
            <person name="Ivanova N."/>
            <person name="Anderson I."/>
            <person name="Lykidis A."/>
            <person name="Hooper S.D."/>
            <person name="Sun H."/>
            <person name="Kunin V."/>
            <person name="Lapidus A."/>
            <person name="Hugenholtz P."/>
            <person name="Patel B."/>
            <person name="Kyrpides N.C."/>
        </authorList>
    </citation>
    <scope>NUCLEOTIDE SEQUENCE [LARGE SCALE GENOMIC DNA]</scope>
    <source>
        <strain>H 168 / OCM 544 / DSM 9562</strain>
    </source>
</reference>
<dbReference type="EC" id="2.4.2.29" evidence="1"/>
<dbReference type="EMBL" id="CP001098">
    <property type="protein sequence ID" value="ACL69979.1"/>
    <property type="molecule type" value="Genomic_DNA"/>
</dbReference>
<dbReference type="RefSeq" id="WP_012636163.1">
    <property type="nucleotide sequence ID" value="NC_011899.1"/>
</dbReference>
<dbReference type="SMR" id="B8CXG0"/>
<dbReference type="STRING" id="373903.Hore_12290"/>
<dbReference type="KEGG" id="hor:Hore_12290"/>
<dbReference type="eggNOG" id="COG0343">
    <property type="taxonomic scope" value="Bacteria"/>
</dbReference>
<dbReference type="HOGENOM" id="CLU_022060_0_1_9"/>
<dbReference type="OrthoDB" id="9805417at2"/>
<dbReference type="UniPathway" id="UPA00392"/>
<dbReference type="Proteomes" id="UP000000719">
    <property type="component" value="Chromosome"/>
</dbReference>
<dbReference type="GO" id="GO:0005829">
    <property type="term" value="C:cytosol"/>
    <property type="evidence" value="ECO:0007669"/>
    <property type="project" value="TreeGrafter"/>
</dbReference>
<dbReference type="GO" id="GO:0046872">
    <property type="term" value="F:metal ion binding"/>
    <property type="evidence" value="ECO:0007669"/>
    <property type="project" value="UniProtKB-KW"/>
</dbReference>
<dbReference type="GO" id="GO:0008479">
    <property type="term" value="F:tRNA-guanosine(34) queuine transglycosylase activity"/>
    <property type="evidence" value="ECO:0007669"/>
    <property type="project" value="UniProtKB-UniRule"/>
</dbReference>
<dbReference type="GO" id="GO:0008616">
    <property type="term" value="P:queuosine biosynthetic process"/>
    <property type="evidence" value="ECO:0007669"/>
    <property type="project" value="UniProtKB-UniRule"/>
</dbReference>
<dbReference type="GO" id="GO:0002099">
    <property type="term" value="P:tRNA wobble guanine modification"/>
    <property type="evidence" value="ECO:0007669"/>
    <property type="project" value="TreeGrafter"/>
</dbReference>
<dbReference type="GO" id="GO:0101030">
    <property type="term" value="P:tRNA-guanine transglycosylation"/>
    <property type="evidence" value="ECO:0007669"/>
    <property type="project" value="InterPro"/>
</dbReference>
<dbReference type="FunFam" id="3.20.20.105:FF:000001">
    <property type="entry name" value="Queuine tRNA-ribosyltransferase"/>
    <property type="match status" value="1"/>
</dbReference>
<dbReference type="Gene3D" id="3.20.20.105">
    <property type="entry name" value="Queuine tRNA-ribosyltransferase-like"/>
    <property type="match status" value="1"/>
</dbReference>
<dbReference type="HAMAP" id="MF_00168">
    <property type="entry name" value="Q_tRNA_Tgt"/>
    <property type="match status" value="1"/>
</dbReference>
<dbReference type="InterPro" id="IPR050076">
    <property type="entry name" value="ArchSynthase1/Queuine_TRR"/>
</dbReference>
<dbReference type="InterPro" id="IPR004803">
    <property type="entry name" value="TGT"/>
</dbReference>
<dbReference type="InterPro" id="IPR036511">
    <property type="entry name" value="TGT-like_sf"/>
</dbReference>
<dbReference type="InterPro" id="IPR002616">
    <property type="entry name" value="tRNA_ribo_trans-like"/>
</dbReference>
<dbReference type="NCBIfam" id="TIGR00430">
    <property type="entry name" value="Q_tRNA_tgt"/>
    <property type="match status" value="1"/>
</dbReference>
<dbReference type="NCBIfam" id="TIGR00449">
    <property type="entry name" value="tgt_general"/>
    <property type="match status" value="1"/>
</dbReference>
<dbReference type="PANTHER" id="PTHR46499">
    <property type="entry name" value="QUEUINE TRNA-RIBOSYLTRANSFERASE"/>
    <property type="match status" value="1"/>
</dbReference>
<dbReference type="PANTHER" id="PTHR46499:SF1">
    <property type="entry name" value="QUEUINE TRNA-RIBOSYLTRANSFERASE"/>
    <property type="match status" value="1"/>
</dbReference>
<dbReference type="Pfam" id="PF01702">
    <property type="entry name" value="TGT"/>
    <property type="match status" value="1"/>
</dbReference>
<dbReference type="SUPFAM" id="SSF51713">
    <property type="entry name" value="tRNA-guanine transglycosylase"/>
    <property type="match status" value="1"/>
</dbReference>